<accession>B2TZA6</accession>
<sequence length="108" mass="12400">MPKPGILKSKSMFCVIYRSSKRDQTYLYVEKKDDFSRVPEELMKGFGQPQLAMILPLDGRKKLVNADIEKVKLALTEQGYYLQLPPPPEDLLKQHLSVMGQKTDDTNK</sequence>
<reference key="1">
    <citation type="submission" date="2008-05" db="EMBL/GenBank/DDBJ databases">
        <title>Complete sequence of Shigella boydii serotype 18 strain BS512.</title>
        <authorList>
            <person name="Rasko D.A."/>
            <person name="Rosovitz M."/>
            <person name="Maurelli A.T."/>
            <person name="Myers G."/>
            <person name="Seshadri R."/>
            <person name="Cer R."/>
            <person name="Jiang L."/>
            <person name="Ravel J."/>
            <person name="Sebastian Y."/>
        </authorList>
    </citation>
    <scope>NUCLEOTIDE SEQUENCE [LARGE SCALE GENOMIC DNA]</scope>
    <source>
        <strain>CDC 3083-94 / BS512</strain>
    </source>
</reference>
<keyword id="KW-1185">Reference proteome</keyword>
<organism>
    <name type="scientific">Shigella boydii serotype 18 (strain CDC 3083-94 / BS512)</name>
    <dbReference type="NCBI Taxonomy" id="344609"/>
    <lineage>
        <taxon>Bacteria</taxon>
        <taxon>Pseudomonadati</taxon>
        <taxon>Pseudomonadota</taxon>
        <taxon>Gammaproteobacteria</taxon>
        <taxon>Enterobacterales</taxon>
        <taxon>Enterobacteriaceae</taxon>
        <taxon>Shigella</taxon>
    </lineage>
</organism>
<gene>
    <name evidence="1" type="primary">ycgL</name>
    <name type="ordered locus">SbBS512_E1334</name>
</gene>
<feature type="chain" id="PRO_0000375382" description="Protein YcgL">
    <location>
        <begin position="1"/>
        <end position="108"/>
    </location>
</feature>
<feature type="domain" description="YcgL" evidence="1">
    <location>
        <begin position="12"/>
        <end position="96"/>
    </location>
</feature>
<evidence type="ECO:0000255" key="1">
    <source>
        <dbReference type="HAMAP-Rule" id="MF_01866"/>
    </source>
</evidence>
<evidence type="ECO:0000305" key="2"/>
<name>YCGL_SHIB3</name>
<protein>
    <recommendedName>
        <fullName evidence="1">Protein YcgL</fullName>
    </recommendedName>
</protein>
<dbReference type="EMBL" id="CP001063">
    <property type="protein sequence ID" value="ACD10468.1"/>
    <property type="status" value="ALT_INIT"/>
    <property type="molecule type" value="Genomic_DNA"/>
</dbReference>
<dbReference type="SMR" id="B2TZA6"/>
<dbReference type="STRING" id="344609.SbBS512_E1334"/>
<dbReference type="KEGG" id="sbc:SbBS512_E1334"/>
<dbReference type="HOGENOM" id="CLU_155118_1_0_6"/>
<dbReference type="Proteomes" id="UP000001030">
    <property type="component" value="Chromosome"/>
</dbReference>
<dbReference type="Gene3D" id="3.10.510.20">
    <property type="entry name" value="YcgL domain"/>
    <property type="match status" value="1"/>
</dbReference>
<dbReference type="HAMAP" id="MF_01866">
    <property type="entry name" value="UPF0745"/>
    <property type="match status" value="1"/>
</dbReference>
<dbReference type="InterPro" id="IPR038068">
    <property type="entry name" value="YcgL-like_sf"/>
</dbReference>
<dbReference type="InterPro" id="IPR027354">
    <property type="entry name" value="YcgL_dom"/>
</dbReference>
<dbReference type="PANTHER" id="PTHR38109">
    <property type="entry name" value="PROTEIN YCGL"/>
    <property type="match status" value="1"/>
</dbReference>
<dbReference type="PANTHER" id="PTHR38109:SF1">
    <property type="entry name" value="PROTEIN YCGL"/>
    <property type="match status" value="1"/>
</dbReference>
<dbReference type="Pfam" id="PF05166">
    <property type="entry name" value="YcgL"/>
    <property type="match status" value="1"/>
</dbReference>
<dbReference type="SUPFAM" id="SSF160191">
    <property type="entry name" value="YcgL-like"/>
    <property type="match status" value="1"/>
</dbReference>
<dbReference type="PROSITE" id="PS51648">
    <property type="entry name" value="YCGL"/>
    <property type="match status" value="1"/>
</dbReference>
<comment type="sequence caution" evidence="2">
    <conflict type="erroneous initiation">
        <sequence resource="EMBL-CDS" id="ACD10468"/>
    </conflict>
</comment>
<proteinExistence type="inferred from homology"/>